<name>Y1859_ARCFU</name>
<reference key="1">
    <citation type="journal article" date="1997" name="Nature">
        <title>The complete genome sequence of the hyperthermophilic, sulphate-reducing archaeon Archaeoglobus fulgidus.</title>
        <authorList>
            <person name="Klenk H.-P."/>
            <person name="Clayton R.A."/>
            <person name="Tomb J.-F."/>
            <person name="White O."/>
            <person name="Nelson K.E."/>
            <person name="Ketchum K.A."/>
            <person name="Dodson R.J."/>
            <person name="Gwinn M.L."/>
            <person name="Hickey E.K."/>
            <person name="Peterson J.D."/>
            <person name="Richardson D.L."/>
            <person name="Kerlavage A.R."/>
            <person name="Graham D.E."/>
            <person name="Kyrpides N.C."/>
            <person name="Fleischmann R.D."/>
            <person name="Quackenbush J."/>
            <person name="Lee N.H."/>
            <person name="Sutton G.G."/>
            <person name="Gill S.R."/>
            <person name="Kirkness E.F."/>
            <person name="Dougherty B.A."/>
            <person name="McKenney K."/>
            <person name="Adams M.D."/>
            <person name="Loftus B.J."/>
            <person name="Peterson S.N."/>
            <person name="Reich C.I."/>
            <person name="McNeil L.K."/>
            <person name="Badger J.H."/>
            <person name="Glodek A."/>
            <person name="Zhou L."/>
            <person name="Overbeek R."/>
            <person name="Gocayne J.D."/>
            <person name="Weidman J.F."/>
            <person name="McDonald L.A."/>
            <person name="Utterback T.R."/>
            <person name="Cotton M.D."/>
            <person name="Spriggs T."/>
            <person name="Artiach P."/>
            <person name="Kaine B.P."/>
            <person name="Sykes S.M."/>
            <person name="Sadow P.W."/>
            <person name="D'Andrea K.P."/>
            <person name="Bowman C."/>
            <person name="Fujii C."/>
            <person name="Garland S.A."/>
            <person name="Mason T.M."/>
            <person name="Olsen G.J."/>
            <person name="Fraser C.M."/>
            <person name="Smith H.O."/>
            <person name="Woese C.R."/>
            <person name="Venter J.C."/>
        </authorList>
    </citation>
    <scope>NUCLEOTIDE SEQUENCE [LARGE SCALE GENOMIC DNA]</scope>
    <source>
        <strain>ATCC 49558 / DSM 4304 / JCM 9628 / NBRC 100126 / VC-16</strain>
    </source>
</reference>
<sequence length="289" mass="32862">MSFSLQLTRLKARLYFPQYHLPPFLGNKFRGGFGSVLLKAVCSYLKPSCNICKSVDDCLYHALYTRDRQKRGRSQPVRPIVFIPPFFGRSVSGRGELTLYINVFGDYVKYLPHIIYGLRYLGKMGLNATSKYEIVSISDAISGKEVYDGETVFVENLSSIELGKIKPREVEKEIEVDYLTPMEAKTPINLPFLIHIVRRRLILFVNEYGSGEVPEFYCEAETLESSWEKHELHHRSKRQGLRSFFGVTGRARYSISEIDDNALTLLSIGELIGGGAKASFGMGFFRIRS</sequence>
<feature type="chain" id="PRO_0000128065" description="Uncharacterized protein AF_1859">
    <location>
        <begin position="1"/>
        <end position="289"/>
    </location>
</feature>
<keyword id="KW-1185">Reference proteome</keyword>
<proteinExistence type="predicted"/>
<protein>
    <recommendedName>
        <fullName>Uncharacterized protein AF_1859</fullName>
    </recommendedName>
</protein>
<dbReference type="EMBL" id="AE000782">
    <property type="protein sequence ID" value="AAB89395.1"/>
    <property type="molecule type" value="Genomic_DNA"/>
</dbReference>
<dbReference type="PIR" id="B69482">
    <property type="entry name" value="B69482"/>
</dbReference>
<dbReference type="RefSeq" id="WP_010879352.1">
    <property type="nucleotide sequence ID" value="NC_000917.1"/>
</dbReference>
<dbReference type="STRING" id="224325.AF_1859"/>
<dbReference type="PaxDb" id="224325-AF_1859"/>
<dbReference type="EnsemblBacteria" id="AAB89395">
    <property type="protein sequence ID" value="AAB89395"/>
    <property type="gene ID" value="AF_1859"/>
</dbReference>
<dbReference type="KEGG" id="afu:AF_1859"/>
<dbReference type="eggNOG" id="arCOG10147">
    <property type="taxonomic scope" value="Archaea"/>
</dbReference>
<dbReference type="HOGENOM" id="CLU_926256_0_0_2"/>
<dbReference type="OrthoDB" id="359204at2157"/>
<dbReference type="Proteomes" id="UP000002199">
    <property type="component" value="Chromosome"/>
</dbReference>
<dbReference type="Gene3D" id="3.30.70.1900">
    <property type="match status" value="1"/>
</dbReference>
<gene>
    <name type="ordered locus">AF_1859</name>
</gene>
<accession>O28420</accession>
<organism>
    <name type="scientific">Archaeoglobus fulgidus (strain ATCC 49558 / DSM 4304 / JCM 9628 / NBRC 100126 / VC-16)</name>
    <dbReference type="NCBI Taxonomy" id="224325"/>
    <lineage>
        <taxon>Archaea</taxon>
        <taxon>Methanobacteriati</taxon>
        <taxon>Methanobacteriota</taxon>
        <taxon>Archaeoglobi</taxon>
        <taxon>Archaeoglobales</taxon>
        <taxon>Archaeoglobaceae</taxon>
        <taxon>Archaeoglobus</taxon>
    </lineage>
</organism>